<dbReference type="EMBL" id="CP000082">
    <property type="protein sequence ID" value="AAZ19738.1"/>
    <property type="molecule type" value="Genomic_DNA"/>
</dbReference>
<dbReference type="RefSeq" id="WP_011281148.1">
    <property type="nucleotide sequence ID" value="NC_007204.1"/>
</dbReference>
<dbReference type="SMR" id="Q4FQH0"/>
<dbReference type="STRING" id="259536.Psyc_1890"/>
<dbReference type="KEGG" id="par:Psyc_1890"/>
<dbReference type="eggNOG" id="COG0081">
    <property type="taxonomic scope" value="Bacteria"/>
</dbReference>
<dbReference type="HOGENOM" id="CLU_062853_0_0_6"/>
<dbReference type="OrthoDB" id="9803740at2"/>
<dbReference type="Proteomes" id="UP000000546">
    <property type="component" value="Chromosome"/>
</dbReference>
<dbReference type="GO" id="GO:0022625">
    <property type="term" value="C:cytosolic large ribosomal subunit"/>
    <property type="evidence" value="ECO:0007669"/>
    <property type="project" value="TreeGrafter"/>
</dbReference>
<dbReference type="GO" id="GO:0019843">
    <property type="term" value="F:rRNA binding"/>
    <property type="evidence" value="ECO:0007669"/>
    <property type="project" value="UniProtKB-UniRule"/>
</dbReference>
<dbReference type="GO" id="GO:0003735">
    <property type="term" value="F:structural constituent of ribosome"/>
    <property type="evidence" value="ECO:0007669"/>
    <property type="project" value="InterPro"/>
</dbReference>
<dbReference type="GO" id="GO:0000049">
    <property type="term" value="F:tRNA binding"/>
    <property type="evidence" value="ECO:0007669"/>
    <property type="project" value="UniProtKB-KW"/>
</dbReference>
<dbReference type="GO" id="GO:0006417">
    <property type="term" value="P:regulation of translation"/>
    <property type="evidence" value="ECO:0007669"/>
    <property type="project" value="UniProtKB-KW"/>
</dbReference>
<dbReference type="GO" id="GO:0006412">
    <property type="term" value="P:translation"/>
    <property type="evidence" value="ECO:0007669"/>
    <property type="project" value="UniProtKB-UniRule"/>
</dbReference>
<dbReference type="CDD" id="cd00403">
    <property type="entry name" value="Ribosomal_L1"/>
    <property type="match status" value="1"/>
</dbReference>
<dbReference type="FunFam" id="3.40.50.790:FF:000001">
    <property type="entry name" value="50S ribosomal protein L1"/>
    <property type="match status" value="1"/>
</dbReference>
<dbReference type="Gene3D" id="3.30.190.20">
    <property type="match status" value="1"/>
</dbReference>
<dbReference type="Gene3D" id="3.40.50.790">
    <property type="match status" value="1"/>
</dbReference>
<dbReference type="HAMAP" id="MF_01318_B">
    <property type="entry name" value="Ribosomal_uL1_B"/>
    <property type="match status" value="1"/>
</dbReference>
<dbReference type="InterPro" id="IPR005878">
    <property type="entry name" value="Ribosom_uL1_bac-type"/>
</dbReference>
<dbReference type="InterPro" id="IPR002143">
    <property type="entry name" value="Ribosomal_uL1"/>
</dbReference>
<dbReference type="InterPro" id="IPR023674">
    <property type="entry name" value="Ribosomal_uL1-like"/>
</dbReference>
<dbReference type="InterPro" id="IPR028364">
    <property type="entry name" value="Ribosomal_uL1/biogenesis"/>
</dbReference>
<dbReference type="InterPro" id="IPR016095">
    <property type="entry name" value="Ribosomal_uL1_3-a/b-sand"/>
</dbReference>
<dbReference type="InterPro" id="IPR023673">
    <property type="entry name" value="Ribosomal_uL1_CS"/>
</dbReference>
<dbReference type="NCBIfam" id="TIGR01169">
    <property type="entry name" value="rplA_bact"/>
    <property type="match status" value="1"/>
</dbReference>
<dbReference type="PANTHER" id="PTHR36427">
    <property type="entry name" value="54S RIBOSOMAL PROTEIN L1, MITOCHONDRIAL"/>
    <property type="match status" value="1"/>
</dbReference>
<dbReference type="PANTHER" id="PTHR36427:SF3">
    <property type="entry name" value="LARGE RIBOSOMAL SUBUNIT PROTEIN UL1M"/>
    <property type="match status" value="1"/>
</dbReference>
<dbReference type="Pfam" id="PF00687">
    <property type="entry name" value="Ribosomal_L1"/>
    <property type="match status" value="1"/>
</dbReference>
<dbReference type="PIRSF" id="PIRSF002155">
    <property type="entry name" value="Ribosomal_L1"/>
    <property type="match status" value="1"/>
</dbReference>
<dbReference type="SUPFAM" id="SSF56808">
    <property type="entry name" value="Ribosomal protein L1"/>
    <property type="match status" value="1"/>
</dbReference>
<dbReference type="PROSITE" id="PS01199">
    <property type="entry name" value="RIBOSOMAL_L1"/>
    <property type="match status" value="1"/>
</dbReference>
<gene>
    <name evidence="1" type="primary">rplA</name>
    <name type="ordered locus">Psyc_1890</name>
</gene>
<sequence>MSKLTKRQKEINSRIEHEKQYTIEEAVQILNDLPPLKFKESIDIAVNLGVDPRKSDQVVRGATNLPAGTGKTKRVAVFAQGAAAEAAKEAGADIVGFEDLAESIKAGNMDFDVVIAAPDAMRVVGQLGTILGPRGLMPNPKVGTVTPNVAEAVLNAKAGQAQYRVDKAGIIHTTIGQVGFTAEQVIQNAEALISDLRRAKPATSKGTFIKKITLSSTMGPGLSIDPVPYRTAK</sequence>
<evidence type="ECO:0000255" key="1">
    <source>
        <dbReference type="HAMAP-Rule" id="MF_01318"/>
    </source>
</evidence>
<evidence type="ECO:0000305" key="2"/>
<name>RL1_PSYA2</name>
<proteinExistence type="inferred from homology"/>
<protein>
    <recommendedName>
        <fullName evidence="1">Large ribosomal subunit protein uL1</fullName>
    </recommendedName>
    <alternativeName>
        <fullName evidence="2">50S ribosomal protein L1</fullName>
    </alternativeName>
</protein>
<keyword id="KW-1185">Reference proteome</keyword>
<keyword id="KW-0678">Repressor</keyword>
<keyword id="KW-0687">Ribonucleoprotein</keyword>
<keyword id="KW-0689">Ribosomal protein</keyword>
<keyword id="KW-0694">RNA-binding</keyword>
<keyword id="KW-0699">rRNA-binding</keyword>
<keyword id="KW-0810">Translation regulation</keyword>
<keyword id="KW-0820">tRNA-binding</keyword>
<comment type="function">
    <text evidence="1">Binds directly to 23S rRNA. The L1 stalk is quite mobile in the ribosome, and is involved in E site tRNA release.</text>
</comment>
<comment type="function">
    <text evidence="1">Protein L1 is also a translational repressor protein, it controls the translation of the L11 operon by binding to its mRNA.</text>
</comment>
<comment type="subunit">
    <text evidence="1">Part of the 50S ribosomal subunit.</text>
</comment>
<comment type="similarity">
    <text evidence="1">Belongs to the universal ribosomal protein uL1 family.</text>
</comment>
<accession>Q4FQH0</accession>
<reference key="1">
    <citation type="journal article" date="2010" name="Appl. Environ. Microbiol.">
        <title>The genome sequence of Psychrobacter arcticus 273-4, a psychroactive Siberian permafrost bacterium, reveals mechanisms for adaptation to low-temperature growth.</title>
        <authorList>
            <person name="Ayala-del-Rio H.L."/>
            <person name="Chain P.S."/>
            <person name="Grzymski J.J."/>
            <person name="Ponder M.A."/>
            <person name="Ivanova N."/>
            <person name="Bergholz P.W."/>
            <person name="Di Bartolo G."/>
            <person name="Hauser L."/>
            <person name="Land M."/>
            <person name="Bakermans C."/>
            <person name="Rodrigues D."/>
            <person name="Klappenbach J."/>
            <person name="Zarka D."/>
            <person name="Larimer F."/>
            <person name="Richardson P."/>
            <person name="Murray A."/>
            <person name="Thomashow M."/>
            <person name="Tiedje J.M."/>
        </authorList>
    </citation>
    <scope>NUCLEOTIDE SEQUENCE [LARGE SCALE GENOMIC DNA]</scope>
    <source>
        <strain>DSM 17307 / VKM B-2377 / 273-4</strain>
    </source>
</reference>
<feature type="chain" id="PRO_0000230630" description="Large ribosomal subunit protein uL1">
    <location>
        <begin position="1"/>
        <end position="233"/>
    </location>
</feature>
<organism>
    <name type="scientific">Psychrobacter arcticus (strain DSM 17307 / VKM B-2377 / 273-4)</name>
    <dbReference type="NCBI Taxonomy" id="259536"/>
    <lineage>
        <taxon>Bacteria</taxon>
        <taxon>Pseudomonadati</taxon>
        <taxon>Pseudomonadota</taxon>
        <taxon>Gammaproteobacteria</taxon>
        <taxon>Moraxellales</taxon>
        <taxon>Moraxellaceae</taxon>
        <taxon>Psychrobacter</taxon>
    </lineage>
</organism>